<feature type="chain" id="PRO_0000351354" description="Autoinducer 2 import system permease protein LsrC">
    <location>
        <begin position="1"/>
        <end position="351"/>
    </location>
</feature>
<feature type="transmembrane region" description="Helical" evidence="2">
    <location>
        <begin position="14"/>
        <end position="34"/>
    </location>
</feature>
<feature type="transmembrane region" description="Helical" evidence="2">
    <location>
        <begin position="39"/>
        <end position="59"/>
    </location>
</feature>
<feature type="transmembrane region" description="Helical" evidence="2">
    <location>
        <begin position="70"/>
        <end position="90"/>
    </location>
</feature>
<feature type="transmembrane region" description="Helical" evidence="2">
    <location>
        <begin position="93"/>
        <end position="113"/>
    </location>
</feature>
<feature type="transmembrane region" description="Helical" evidence="2">
    <location>
        <begin position="115"/>
        <end position="135"/>
    </location>
</feature>
<feature type="transmembrane region" description="Helical" evidence="2">
    <location>
        <begin position="155"/>
        <end position="175"/>
    </location>
</feature>
<feature type="transmembrane region" description="Helical" evidence="2">
    <location>
        <begin position="213"/>
        <end position="233"/>
    </location>
</feature>
<feature type="transmembrane region" description="Helical" evidence="2">
    <location>
        <begin position="252"/>
        <end position="272"/>
    </location>
</feature>
<feature type="transmembrane region" description="Helical" evidence="2">
    <location>
        <begin position="284"/>
        <end position="304"/>
    </location>
</feature>
<reference key="1">
    <citation type="journal article" date="2002" name="J. Bacteriol.">
        <title>Genome sequence of Yersinia pestis KIM.</title>
        <authorList>
            <person name="Deng W."/>
            <person name="Burland V."/>
            <person name="Plunkett G. III"/>
            <person name="Boutin A."/>
            <person name="Mayhew G.F."/>
            <person name="Liss P."/>
            <person name="Perna N.T."/>
            <person name="Rose D.J."/>
            <person name="Mau B."/>
            <person name="Zhou S."/>
            <person name="Schwartz D.C."/>
            <person name="Fetherston J.D."/>
            <person name="Lindler L.E."/>
            <person name="Brubaker R.R."/>
            <person name="Plano G.V."/>
            <person name="Straley S.C."/>
            <person name="McDonough K.A."/>
            <person name="Nilles M.L."/>
            <person name="Matson J.S."/>
            <person name="Blattner F.R."/>
            <person name="Perry R.D."/>
        </authorList>
    </citation>
    <scope>NUCLEOTIDE SEQUENCE [LARGE SCALE GENOMIC DNA]</scope>
    <source>
        <strain>KIM10+ / Biovar Mediaevalis</strain>
    </source>
</reference>
<reference key="2">
    <citation type="journal article" date="2001" name="Nature">
        <title>Genome sequence of Yersinia pestis, the causative agent of plague.</title>
        <authorList>
            <person name="Parkhill J."/>
            <person name="Wren B.W."/>
            <person name="Thomson N.R."/>
            <person name="Titball R.W."/>
            <person name="Holden M.T.G."/>
            <person name="Prentice M.B."/>
            <person name="Sebaihia M."/>
            <person name="James K.D."/>
            <person name="Churcher C.M."/>
            <person name="Mungall K.L."/>
            <person name="Baker S."/>
            <person name="Basham D."/>
            <person name="Bentley S.D."/>
            <person name="Brooks K."/>
            <person name="Cerdeno-Tarraga A.-M."/>
            <person name="Chillingworth T."/>
            <person name="Cronin A."/>
            <person name="Davies R.M."/>
            <person name="Davis P."/>
            <person name="Dougan G."/>
            <person name="Feltwell T."/>
            <person name="Hamlin N."/>
            <person name="Holroyd S."/>
            <person name="Jagels K."/>
            <person name="Karlyshev A.V."/>
            <person name="Leather S."/>
            <person name="Moule S."/>
            <person name="Oyston P.C.F."/>
            <person name="Quail M.A."/>
            <person name="Rutherford K.M."/>
            <person name="Simmonds M."/>
            <person name="Skelton J."/>
            <person name="Stevens K."/>
            <person name="Whitehead S."/>
            <person name="Barrell B.G."/>
        </authorList>
    </citation>
    <scope>NUCLEOTIDE SEQUENCE [LARGE SCALE GENOMIC DNA]</scope>
    <source>
        <strain>CO-92 / Biovar Orientalis</strain>
    </source>
</reference>
<reference key="3">
    <citation type="journal article" date="2004" name="DNA Res.">
        <title>Complete genome sequence of Yersinia pestis strain 91001, an isolate avirulent to humans.</title>
        <authorList>
            <person name="Song Y."/>
            <person name="Tong Z."/>
            <person name="Wang J."/>
            <person name="Wang L."/>
            <person name="Guo Z."/>
            <person name="Han Y."/>
            <person name="Zhang J."/>
            <person name="Pei D."/>
            <person name="Zhou D."/>
            <person name="Qin H."/>
            <person name="Pang X."/>
            <person name="Han Y."/>
            <person name="Zhai J."/>
            <person name="Li M."/>
            <person name="Cui B."/>
            <person name="Qi Z."/>
            <person name="Jin L."/>
            <person name="Dai R."/>
            <person name="Chen F."/>
            <person name="Li S."/>
            <person name="Ye C."/>
            <person name="Du Z."/>
            <person name="Lin W."/>
            <person name="Wang J."/>
            <person name="Yu J."/>
            <person name="Yang H."/>
            <person name="Wang J."/>
            <person name="Huang P."/>
            <person name="Yang R."/>
        </authorList>
    </citation>
    <scope>NUCLEOTIDE SEQUENCE [LARGE SCALE GENOMIC DNA]</scope>
    <source>
        <strain>91001 / Biovar Mediaevalis</strain>
    </source>
</reference>
<sequence length="351" mass="37247">MLKFIQNNREGTALLAILTLFALLGIIDRNYFSLQTFTMIFSSAQILILLAIGATLVMLTRNIDVSVGSITGLCAVTVGMALNAGFGLAASCLFALLVGMVAGFFNGILVTWLRIPAIVATLGTLGLYRGLMLLLTGGKWIEGLPADLKSLSTPILFSISPIGWLTMLLILAMAWLLGKTAFGRSFYATGDNLQGARQLGVRTDSLRIFAFSMNGVMAALAGIVFASQIGFIPNQTGNGLEMKAIAACVLGGISLLGGTGTIIGAILGAFLLTQIDSVLVLLRLPAWWNDFIAGLVLLGVLVFDGRLRCAVERNIRQQKYARFTAQAIISDKKPTVSDNNPAASNKKKAAL</sequence>
<protein>
    <recommendedName>
        <fullName>Autoinducer 2 import system permease protein LsrC</fullName>
        <shortName>AI-2 import system permease protein LsrC</shortName>
    </recommendedName>
</protein>
<name>LSRC_YERPE</name>
<evidence type="ECO:0000250" key="1"/>
<evidence type="ECO:0000255" key="2"/>
<evidence type="ECO:0000305" key="3"/>
<accession>Q7CG49</accession>
<accession>Q74PW4</accession>
<keyword id="KW-0997">Cell inner membrane</keyword>
<keyword id="KW-1003">Cell membrane</keyword>
<keyword id="KW-0472">Membrane</keyword>
<keyword id="KW-1185">Reference proteome</keyword>
<keyword id="KW-0812">Transmembrane</keyword>
<keyword id="KW-1133">Transmembrane helix</keyword>
<keyword id="KW-0813">Transport</keyword>
<gene>
    <name type="primary">lsrC</name>
    <name type="ordered locus">YPO0411</name>
    <name type="ordered locus">y3770</name>
    <name type="ordered locus">YP_3770</name>
</gene>
<organism>
    <name type="scientific">Yersinia pestis</name>
    <dbReference type="NCBI Taxonomy" id="632"/>
    <lineage>
        <taxon>Bacteria</taxon>
        <taxon>Pseudomonadati</taxon>
        <taxon>Pseudomonadota</taxon>
        <taxon>Gammaproteobacteria</taxon>
        <taxon>Enterobacterales</taxon>
        <taxon>Yersiniaceae</taxon>
        <taxon>Yersinia</taxon>
    </lineage>
</organism>
<proteinExistence type="inferred from homology"/>
<dbReference type="EMBL" id="AE009952">
    <property type="protein sequence ID" value="AAM87315.1"/>
    <property type="molecule type" value="Genomic_DNA"/>
</dbReference>
<dbReference type="EMBL" id="AE017042">
    <property type="protein sequence ID" value="AAS63918.1"/>
    <property type="molecule type" value="Genomic_DNA"/>
</dbReference>
<dbReference type="EMBL" id="AL590842">
    <property type="protein sequence ID" value="CAL19092.1"/>
    <property type="molecule type" value="Genomic_DNA"/>
</dbReference>
<dbReference type="PIR" id="AB0051">
    <property type="entry name" value="AB0051"/>
</dbReference>
<dbReference type="RefSeq" id="WP_002209191.1">
    <property type="nucleotide sequence ID" value="NZ_WUCM01000002.1"/>
</dbReference>
<dbReference type="RefSeq" id="YP_002345488.1">
    <property type="nucleotide sequence ID" value="NC_003143.1"/>
</dbReference>
<dbReference type="STRING" id="214092.YPO0411"/>
<dbReference type="PaxDb" id="214092-YPO0411"/>
<dbReference type="DNASU" id="1148717"/>
<dbReference type="EnsemblBacteria" id="AAS63918">
    <property type="protein sequence ID" value="AAS63918"/>
    <property type="gene ID" value="YP_3770"/>
</dbReference>
<dbReference type="GeneID" id="57974199"/>
<dbReference type="KEGG" id="ype:YPO0411"/>
<dbReference type="KEGG" id="ypk:y3770"/>
<dbReference type="KEGG" id="ypm:YP_3770"/>
<dbReference type="PATRIC" id="fig|214092.21.peg.651"/>
<dbReference type="eggNOG" id="COG1172">
    <property type="taxonomic scope" value="Bacteria"/>
</dbReference>
<dbReference type="HOGENOM" id="CLU_028880_0_1_6"/>
<dbReference type="OMA" id="FGRDFYA"/>
<dbReference type="OrthoDB" id="6384190at2"/>
<dbReference type="Proteomes" id="UP000000815">
    <property type="component" value="Chromosome"/>
</dbReference>
<dbReference type="Proteomes" id="UP000001019">
    <property type="component" value="Chromosome"/>
</dbReference>
<dbReference type="Proteomes" id="UP000002490">
    <property type="component" value="Chromosome"/>
</dbReference>
<dbReference type="GO" id="GO:0005886">
    <property type="term" value="C:plasma membrane"/>
    <property type="evidence" value="ECO:0000318"/>
    <property type="project" value="GO_Central"/>
</dbReference>
<dbReference type="GO" id="GO:0022857">
    <property type="term" value="F:transmembrane transporter activity"/>
    <property type="evidence" value="ECO:0007669"/>
    <property type="project" value="InterPro"/>
</dbReference>
<dbReference type="CDD" id="cd06579">
    <property type="entry name" value="TM_PBP1_transp_AraH_like"/>
    <property type="match status" value="1"/>
</dbReference>
<dbReference type="InterPro" id="IPR001851">
    <property type="entry name" value="ABC_transp_permease"/>
</dbReference>
<dbReference type="NCBIfam" id="NF011961">
    <property type="entry name" value="PRK15432.1"/>
    <property type="match status" value="1"/>
</dbReference>
<dbReference type="PANTHER" id="PTHR32196">
    <property type="entry name" value="ABC TRANSPORTER PERMEASE PROTEIN YPHD-RELATED-RELATED"/>
    <property type="match status" value="1"/>
</dbReference>
<dbReference type="PANTHER" id="PTHR32196:SF29">
    <property type="entry name" value="AUTOINDUCER 2 IMPORT SYSTEM PERMEASE PROTEIN LSRC"/>
    <property type="match status" value="1"/>
</dbReference>
<dbReference type="Pfam" id="PF02653">
    <property type="entry name" value="BPD_transp_2"/>
    <property type="match status" value="1"/>
</dbReference>
<comment type="function">
    <text evidence="1">Part of the ABC transporter complex LsrABCD involved in autoinducer 2 (AI-2) import. Probably responsible for the translocation of the substrate across the membrane (By similarity).</text>
</comment>
<comment type="subunit">
    <text evidence="1">The complex is composed of two ATP-binding proteins (LsrA), two transmembrane proteins (LsrC and LsrD) and a solute-binding protein (LsrB).</text>
</comment>
<comment type="subcellular location">
    <subcellularLocation>
        <location evidence="1">Cell inner membrane</location>
        <topology evidence="1">Multi-pass membrane protein</topology>
    </subcellularLocation>
</comment>
<comment type="similarity">
    <text evidence="3">Belongs to the binding-protein-dependent transport system permease family. AraH/RbsC subfamily.</text>
</comment>